<feature type="chain" id="PRO_1000003018" description="Phospho-N-acetylmuramoyl-pentapeptide-transferase">
    <location>
        <begin position="1"/>
        <end position="359"/>
    </location>
</feature>
<feature type="transmembrane region" description="Helical" evidence="1">
    <location>
        <begin position="3"/>
        <end position="23"/>
    </location>
</feature>
<feature type="transmembrane region" description="Helical" evidence="1">
    <location>
        <begin position="55"/>
        <end position="75"/>
    </location>
</feature>
<feature type="transmembrane region" description="Helical" evidence="1">
    <location>
        <begin position="84"/>
        <end position="104"/>
    </location>
</feature>
<feature type="transmembrane region" description="Helical" evidence="1">
    <location>
        <begin position="117"/>
        <end position="137"/>
    </location>
</feature>
<feature type="transmembrane region" description="Helical" evidence="1">
    <location>
        <begin position="156"/>
        <end position="176"/>
    </location>
</feature>
<feature type="transmembrane region" description="Helical" evidence="1">
    <location>
        <begin position="190"/>
        <end position="210"/>
    </location>
</feature>
<feature type="transmembrane region" description="Helical" evidence="1">
    <location>
        <begin position="231"/>
        <end position="251"/>
    </location>
</feature>
<feature type="transmembrane region" description="Helical" evidence="1">
    <location>
        <begin position="255"/>
        <end position="275"/>
    </location>
</feature>
<feature type="transmembrane region" description="Helical" evidence="1">
    <location>
        <begin position="283"/>
        <end position="303"/>
    </location>
</feature>
<feature type="transmembrane region" description="Helical" evidence="1">
    <location>
        <begin position="330"/>
        <end position="350"/>
    </location>
</feature>
<evidence type="ECO:0000255" key="1">
    <source>
        <dbReference type="HAMAP-Rule" id="MF_00038"/>
    </source>
</evidence>
<keyword id="KW-0131">Cell cycle</keyword>
<keyword id="KW-0132">Cell division</keyword>
<keyword id="KW-1003">Cell membrane</keyword>
<keyword id="KW-0133">Cell shape</keyword>
<keyword id="KW-0961">Cell wall biogenesis/degradation</keyword>
<keyword id="KW-0460">Magnesium</keyword>
<keyword id="KW-0472">Membrane</keyword>
<keyword id="KW-0479">Metal-binding</keyword>
<keyword id="KW-0573">Peptidoglycan synthesis</keyword>
<keyword id="KW-0808">Transferase</keyword>
<keyword id="KW-0812">Transmembrane</keyword>
<keyword id="KW-1133">Transmembrane helix</keyword>
<proteinExistence type="inferred from homology"/>
<protein>
    <recommendedName>
        <fullName evidence="1">Phospho-N-acetylmuramoyl-pentapeptide-transferase</fullName>
        <ecNumber evidence="1">2.7.8.13</ecNumber>
    </recommendedName>
    <alternativeName>
        <fullName evidence="1">UDP-MurNAc-pentapeptide phosphotransferase</fullName>
    </alternativeName>
</protein>
<sequence>MRQILIAVAIAVAVSILLTPVLIRLFTRQGFGHEIREDGPPSHHKKRGTPSMGGVAIVAGIWASYFGTHLVGVVIDGKGPSASGLLVLGLATALGAVGFLDDLIKIRRARNLGLNKTAKTVGILVAAVLFGVLALQFRNVDGLTPGSAELSYVREIATVTLAPAVFVLFCVVVVSAWSNAVNFTDGLDGLAAGAMAMVCAAYVLITFWQFRNACATSPGVGCYNVRDPLDLAIIAAATAGACIGFLWWNAAPAKIFMGDTGSLALGGIIAGLSVTSRTEMLAVVLGALFVAEVTSVVVQILAFRTTGRRVFRMAPFHHHFELVGWAETTVIIRFWLLTAIACGLGVALFYSEWLTTVGA</sequence>
<organism>
    <name type="scientific">Mycolicibacterium vanbaalenii (strain DSM 7251 / JCM 13017 / BCRC 16820 / KCTC 9966 / NRRL B-24157 / PYR-1)</name>
    <name type="common">Mycobacterium vanbaalenii</name>
    <dbReference type="NCBI Taxonomy" id="350058"/>
    <lineage>
        <taxon>Bacteria</taxon>
        <taxon>Bacillati</taxon>
        <taxon>Actinomycetota</taxon>
        <taxon>Actinomycetes</taxon>
        <taxon>Mycobacteriales</taxon>
        <taxon>Mycobacteriaceae</taxon>
        <taxon>Mycolicibacterium</taxon>
    </lineage>
</organism>
<name>MRAY_MYCVP</name>
<accession>A1TAX1</accession>
<reference key="1">
    <citation type="submission" date="2006-12" db="EMBL/GenBank/DDBJ databases">
        <title>Complete sequence of Mycobacterium vanbaalenii PYR-1.</title>
        <authorList>
            <consortium name="US DOE Joint Genome Institute"/>
            <person name="Copeland A."/>
            <person name="Lucas S."/>
            <person name="Lapidus A."/>
            <person name="Barry K."/>
            <person name="Detter J.C."/>
            <person name="Glavina del Rio T."/>
            <person name="Hammon N."/>
            <person name="Israni S."/>
            <person name="Dalin E."/>
            <person name="Tice H."/>
            <person name="Pitluck S."/>
            <person name="Singan V."/>
            <person name="Schmutz J."/>
            <person name="Larimer F."/>
            <person name="Land M."/>
            <person name="Hauser L."/>
            <person name="Kyrpides N."/>
            <person name="Anderson I.J."/>
            <person name="Miller C."/>
            <person name="Richardson P."/>
        </authorList>
    </citation>
    <scope>NUCLEOTIDE SEQUENCE [LARGE SCALE GENOMIC DNA]</scope>
    <source>
        <strain>DSM 7251 / JCM 13017 / BCRC 16820 / KCTC 9966 / NRRL B-24157 / PYR-1</strain>
    </source>
</reference>
<gene>
    <name evidence="1" type="primary">mraY</name>
    <name type="ordered locus">Mvan_3526</name>
</gene>
<comment type="function">
    <text evidence="1">Catalyzes the initial step of the lipid cycle reactions in the biosynthesis of the cell wall peptidoglycan: transfers peptidoglycan precursor phospho-MurNAc-pentapeptide from UDP-MurNAc-pentapeptide onto the lipid carrier undecaprenyl phosphate, yielding undecaprenyl-pyrophosphoryl-MurNAc-pentapeptide, known as lipid I.</text>
</comment>
<comment type="catalytic activity">
    <reaction evidence="1">
        <text>UDP-N-acetyl-alpha-D-muramoyl-L-alanyl-gamma-D-glutamyl-meso-2,6-diaminopimeloyl-D-alanyl-D-alanine + di-trans,octa-cis-undecaprenyl phosphate = di-trans,octa-cis-undecaprenyl diphospho-N-acetyl-alpha-D-muramoyl-L-alanyl-D-glutamyl-meso-2,6-diaminopimeloyl-D-alanyl-D-alanine + UMP</text>
        <dbReference type="Rhea" id="RHEA:28386"/>
        <dbReference type="ChEBI" id="CHEBI:57865"/>
        <dbReference type="ChEBI" id="CHEBI:60392"/>
        <dbReference type="ChEBI" id="CHEBI:61386"/>
        <dbReference type="ChEBI" id="CHEBI:61387"/>
        <dbReference type="EC" id="2.7.8.13"/>
    </reaction>
</comment>
<comment type="cofactor">
    <cofactor evidence="1">
        <name>Mg(2+)</name>
        <dbReference type="ChEBI" id="CHEBI:18420"/>
    </cofactor>
</comment>
<comment type="pathway">
    <text evidence="1">Cell wall biogenesis; peptidoglycan biosynthesis.</text>
</comment>
<comment type="subcellular location">
    <subcellularLocation>
        <location evidence="1">Cell membrane</location>
        <topology evidence="1">Multi-pass membrane protein</topology>
    </subcellularLocation>
</comment>
<comment type="similarity">
    <text evidence="1">Belongs to the glycosyltransferase 4 family. MraY subfamily.</text>
</comment>
<dbReference type="EC" id="2.7.8.13" evidence="1"/>
<dbReference type="EMBL" id="CP000511">
    <property type="protein sequence ID" value="ABM14321.1"/>
    <property type="molecule type" value="Genomic_DNA"/>
</dbReference>
<dbReference type="RefSeq" id="WP_011780725.1">
    <property type="nucleotide sequence ID" value="NZ_JACKSD010000138.1"/>
</dbReference>
<dbReference type="SMR" id="A1TAX1"/>
<dbReference type="STRING" id="350058.Mvan_3526"/>
<dbReference type="KEGG" id="mva:Mvan_3526"/>
<dbReference type="eggNOG" id="COG0472">
    <property type="taxonomic scope" value="Bacteria"/>
</dbReference>
<dbReference type="HOGENOM" id="CLU_023982_0_1_11"/>
<dbReference type="UniPathway" id="UPA00219"/>
<dbReference type="Proteomes" id="UP000009159">
    <property type="component" value="Chromosome"/>
</dbReference>
<dbReference type="GO" id="GO:0005886">
    <property type="term" value="C:plasma membrane"/>
    <property type="evidence" value="ECO:0007669"/>
    <property type="project" value="UniProtKB-SubCell"/>
</dbReference>
<dbReference type="GO" id="GO:0046872">
    <property type="term" value="F:metal ion binding"/>
    <property type="evidence" value="ECO:0007669"/>
    <property type="project" value="UniProtKB-KW"/>
</dbReference>
<dbReference type="GO" id="GO:0008963">
    <property type="term" value="F:phospho-N-acetylmuramoyl-pentapeptide-transferase activity"/>
    <property type="evidence" value="ECO:0007669"/>
    <property type="project" value="UniProtKB-UniRule"/>
</dbReference>
<dbReference type="GO" id="GO:0051992">
    <property type="term" value="F:UDP-N-acetylmuramoyl-L-alanyl-D-glutamyl-meso-2,6-diaminopimelyl-D-alanyl-D-alanine:undecaprenyl-phosphate transferase activity"/>
    <property type="evidence" value="ECO:0007669"/>
    <property type="project" value="RHEA"/>
</dbReference>
<dbReference type="GO" id="GO:0051301">
    <property type="term" value="P:cell division"/>
    <property type="evidence" value="ECO:0007669"/>
    <property type="project" value="UniProtKB-KW"/>
</dbReference>
<dbReference type="GO" id="GO:0071555">
    <property type="term" value="P:cell wall organization"/>
    <property type="evidence" value="ECO:0007669"/>
    <property type="project" value="UniProtKB-KW"/>
</dbReference>
<dbReference type="GO" id="GO:0009252">
    <property type="term" value="P:peptidoglycan biosynthetic process"/>
    <property type="evidence" value="ECO:0007669"/>
    <property type="project" value="UniProtKB-UniRule"/>
</dbReference>
<dbReference type="GO" id="GO:0008360">
    <property type="term" value="P:regulation of cell shape"/>
    <property type="evidence" value="ECO:0007669"/>
    <property type="project" value="UniProtKB-KW"/>
</dbReference>
<dbReference type="CDD" id="cd06852">
    <property type="entry name" value="GT_MraY"/>
    <property type="match status" value="1"/>
</dbReference>
<dbReference type="HAMAP" id="MF_00038">
    <property type="entry name" value="MraY"/>
    <property type="match status" value="1"/>
</dbReference>
<dbReference type="InterPro" id="IPR000715">
    <property type="entry name" value="Glycosyl_transferase_4"/>
</dbReference>
<dbReference type="InterPro" id="IPR003524">
    <property type="entry name" value="PNAcMuramoyl-5peptid_Trfase"/>
</dbReference>
<dbReference type="InterPro" id="IPR018480">
    <property type="entry name" value="PNAcMuramoyl-5peptid_Trfase_CS"/>
</dbReference>
<dbReference type="NCBIfam" id="TIGR00445">
    <property type="entry name" value="mraY"/>
    <property type="match status" value="1"/>
</dbReference>
<dbReference type="PANTHER" id="PTHR22926">
    <property type="entry name" value="PHOSPHO-N-ACETYLMURAMOYL-PENTAPEPTIDE-TRANSFERASE"/>
    <property type="match status" value="1"/>
</dbReference>
<dbReference type="PANTHER" id="PTHR22926:SF5">
    <property type="entry name" value="PHOSPHO-N-ACETYLMURAMOYL-PENTAPEPTIDE-TRANSFERASE HOMOLOG"/>
    <property type="match status" value="1"/>
</dbReference>
<dbReference type="Pfam" id="PF00953">
    <property type="entry name" value="Glycos_transf_4"/>
    <property type="match status" value="1"/>
</dbReference>
<dbReference type="Pfam" id="PF10555">
    <property type="entry name" value="MraY_sig1"/>
    <property type="match status" value="1"/>
</dbReference>
<dbReference type="PROSITE" id="PS01347">
    <property type="entry name" value="MRAY_1"/>
    <property type="match status" value="1"/>
</dbReference>
<dbReference type="PROSITE" id="PS01348">
    <property type="entry name" value="MRAY_2"/>
    <property type="match status" value="1"/>
</dbReference>